<feature type="signal peptide" evidence="1">
    <location>
        <begin position="1"/>
        <end position="15"/>
    </location>
</feature>
<feature type="chain" id="PRO_0000440550" description="Hemagglutinin" evidence="1">
    <location>
        <begin position="16"/>
        <end position="585"/>
    </location>
</feature>
<feature type="chain" id="PRO_0000039137" description="Hemagglutinin HA1 chain" evidence="1">
    <location>
        <begin position="16"/>
        <end position="361"/>
    </location>
</feature>
<feature type="chain" id="PRO_0000039138" description="Hemagglutinin HA2 chain" evidence="1">
    <location>
        <begin position="363"/>
        <end position="585"/>
    </location>
</feature>
<feature type="topological domain" description="Extracellular" evidence="1">
    <location>
        <begin position="16"/>
        <end position="553"/>
    </location>
</feature>
<feature type="transmembrane region" description="Helical" evidence="1">
    <location>
        <begin position="554"/>
        <end position="574"/>
    </location>
</feature>
<feature type="topological domain" description="Cytoplasmic" evidence="1">
    <location>
        <begin position="575"/>
        <end position="585"/>
    </location>
</feature>
<feature type="site" description="Cleavage; by host" evidence="1">
    <location>
        <begin position="362"/>
        <end position="363"/>
    </location>
</feature>
<feature type="lipid moiety-binding region" description="S-palmitoyl cysteine; by host" evidence="1">
    <location>
        <position position="581"/>
    </location>
</feature>
<feature type="lipid moiety-binding region" description="S-palmitoyl cysteine; by host" evidence="1">
    <location>
        <position position="584"/>
    </location>
</feature>
<feature type="glycosylation site" description="N-linked (GlcNAc...) asparagine; by host" evidence="1">
    <location>
        <position position="40"/>
    </location>
</feature>
<feature type="glycosylation site" description="N-linked (GlcNAc...) asparagine; by host" evidence="1">
    <location>
        <position position="74"/>
    </location>
</feature>
<feature type="glycosylation site" description="N-linked (GlcNAc...) asparagine; by host" evidence="1">
    <location>
        <position position="160"/>
    </location>
</feature>
<feature type="glycosylation site" description="N-linked (GlcNAc...) asparagine; by host" evidence="1">
    <location>
        <position position="181"/>
    </location>
</feature>
<feature type="glycosylation site" description="N-linked (GlcNAc...) asparagine; by host" evidence="1">
    <location>
        <position position="319"/>
    </location>
</feature>
<feature type="glycosylation site" description="N-linked (GlcNAc...) asparagine; by host" evidence="1">
    <location>
        <position position="348"/>
    </location>
</feature>
<feature type="glycosylation site" description="N-linked (GlcNAc...) asparagine; by host" evidence="1">
    <location>
        <position position="507"/>
    </location>
</feature>
<feature type="glycosylation site" description="N-linked (GlcNAc...) asparagine; by host" evidence="1">
    <location>
        <position position="533"/>
    </location>
</feature>
<feature type="glycosylation site" description="N-linked (GlcNAc...) asparagine; by host" evidence="1">
    <location>
        <position position="546"/>
    </location>
</feature>
<feature type="disulfide bond" description="Interchain (between HA1 and HA2 chains)" evidence="1">
    <location>
        <begin position="19"/>
        <end position="499"/>
    </location>
</feature>
<feature type="disulfide bond" evidence="1">
    <location>
        <begin position="75"/>
        <end position="87"/>
    </location>
</feature>
<feature type="disulfide bond" evidence="1">
    <location>
        <begin position="109"/>
        <end position="158"/>
    </location>
</feature>
<feature type="disulfide bond" evidence="1">
    <location>
        <begin position="506"/>
        <end position="510"/>
    </location>
</feature>
<name>HEMA_INBVK</name>
<evidence type="ECO:0000255" key="1">
    <source>
        <dbReference type="HAMAP-Rule" id="MF_04072"/>
    </source>
</evidence>
<evidence type="ECO:0000305" key="2"/>
<dbReference type="EMBL" id="M58428">
    <property type="protein sequence ID" value="AAA43697.1"/>
    <property type="molecule type" value="Genomic_RNA"/>
</dbReference>
<dbReference type="PIR" id="JQ1901">
    <property type="entry name" value="JQ1901"/>
</dbReference>
<dbReference type="SMR" id="P22092"/>
<dbReference type="GlyCosmos" id="P22092">
    <property type="glycosylation" value="9 sites, No reported glycans"/>
</dbReference>
<dbReference type="GO" id="GO:0020002">
    <property type="term" value="C:host cell plasma membrane"/>
    <property type="evidence" value="ECO:0007669"/>
    <property type="project" value="UniProtKB-SubCell"/>
</dbReference>
<dbReference type="GO" id="GO:0016020">
    <property type="term" value="C:membrane"/>
    <property type="evidence" value="ECO:0007669"/>
    <property type="project" value="UniProtKB-UniRule"/>
</dbReference>
<dbReference type="GO" id="GO:0019031">
    <property type="term" value="C:viral envelope"/>
    <property type="evidence" value="ECO:0007669"/>
    <property type="project" value="UniProtKB-UniRule"/>
</dbReference>
<dbReference type="GO" id="GO:0055036">
    <property type="term" value="C:virion membrane"/>
    <property type="evidence" value="ECO:0007669"/>
    <property type="project" value="UniProtKB-SubCell"/>
</dbReference>
<dbReference type="GO" id="GO:0046789">
    <property type="term" value="F:host cell surface receptor binding"/>
    <property type="evidence" value="ECO:0007669"/>
    <property type="project" value="UniProtKB-UniRule"/>
</dbReference>
<dbReference type="GO" id="GO:0075509">
    <property type="term" value="P:endocytosis involved in viral entry into host cell"/>
    <property type="evidence" value="ECO:0007669"/>
    <property type="project" value="UniProtKB-KW"/>
</dbReference>
<dbReference type="GO" id="GO:0039654">
    <property type="term" value="P:fusion of virus membrane with host endosome membrane"/>
    <property type="evidence" value="ECO:0007669"/>
    <property type="project" value="UniProtKB-UniRule"/>
</dbReference>
<dbReference type="GO" id="GO:0019064">
    <property type="term" value="P:fusion of virus membrane with host plasma membrane"/>
    <property type="evidence" value="ECO:0007669"/>
    <property type="project" value="InterPro"/>
</dbReference>
<dbReference type="GO" id="GO:0046761">
    <property type="term" value="P:viral budding from plasma membrane"/>
    <property type="evidence" value="ECO:0007669"/>
    <property type="project" value="UniProtKB-UniRule"/>
</dbReference>
<dbReference type="GO" id="GO:0019062">
    <property type="term" value="P:virion attachment to host cell"/>
    <property type="evidence" value="ECO:0007669"/>
    <property type="project" value="UniProtKB-KW"/>
</dbReference>
<dbReference type="Gene3D" id="3.90.20.10">
    <property type="match status" value="1"/>
</dbReference>
<dbReference type="Gene3D" id="3.90.209.20">
    <property type="match status" value="1"/>
</dbReference>
<dbReference type="Gene3D" id="2.10.77.10">
    <property type="entry name" value="Hemagglutinin Chain A, Domain 2"/>
    <property type="match status" value="1"/>
</dbReference>
<dbReference type="HAMAP" id="MF_04072">
    <property type="entry name" value="INFV_HEMA"/>
    <property type="match status" value="1"/>
</dbReference>
<dbReference type="InterPro" id="IPR008980">
    <property type="entry name" value="Capsid_hemagglutn"/>
</dbReference>
<dbReference type="InterPro" id="IPR013828">
    <property type="entry name" value="Hemagglutn_HA1_a/b_dom_sf"/>
</dbReference>
<dbReference type="InterPro" id="IPR001364">
    <property type="entry name" value="Hemagglutn_influenz_A/B"/>
</dbReference>
<dbReference type="InterPro" id="IPR000386">
    <property type="entry name" value="Hemagglutn_influenz_B"/>
</dbReference>
<dbReference type="Pfam" id="PF00509">
    <property type="entry name" value="Hemagglutinin"/>
    <property type="match status" value="1"/>
</dbReference>
<dbReference type="PRINTS" id="PR00329">
    <property type="entry name" value="HEMAGGLUTN12"/>
</dbReference>
<dbReference type="PRINTS" id="PR00331">
    <property type="entry name" value="HEMAGGLUTN2"/>
</dbReference>
<dbReference type="SUPFAM" id="SSF58064">
    <property type="entry name" value="Influenza hemagglutinin (stalk)"/>
    <property type="match status" value="1"/>
</dbReference>
<dbReference type="SUPFAM" id="SSF49818">
    <property type="entry name" value="Viral protein domain"/>
    <property type="match status" value="1"/>
</dbReference>
<protein>
    <recommendedName>
        <fullName evidence="1">Hemagglutinin</fullName>
    </recommendedName>
    <component>
        <recommendedName>
            <fullName evidence="1">Hemagglutinin HA1 chain</fullName>
        </recommendedName>
    </component>
    <component>
        <recommendedName>
            <fullName evidence="1">Hemagglutinin HA2 chain</fullName>
        </recommendedName>
    </component>
</protein>
<organism>
    <name type="scientific">Influenza B virus (strain B/Victoria/2/1987)</name>
    <dbReference type="NCBI Taxonomy" id="1077587"/>
    <lineage>
        <taxon>Viruses</taxon>
        <taxon>Riboviria</taxon>
        <taxon>Orthornavirae</taxon>
        <taxon>Negarnaviricota</taxon>
        <taxon>Polyploviricotina</taxon>
        <taxon>Insthoviricetes</taxon>
        <taxon>Articulavirales</taxon>
        <taxon>Orthomyxoviridae</taxon>
        <taxon>Betainfluenzavirus</taxon>
        <taxon>Betainfluenzavirus influenzae</taxon>
        <taxon>Influenza B virus</taxon>
    </lineage>
</organism>
<keyword id="KW-1015">Disulfide bond</keyword>
<keyword id="KW-1170">Fusion of virus membrane with host endosomal membrane</keyword>
<keyword id="KW-1168">Fusion of virus membrane with host membrane</keyword>
<keyword id="KW-0325">Glycoprotein</keyword>
<keyword id="KW-0348">Hemagglutinin</keyword>
<keyword id="KW-1032">Host cell membrane</keyword>
<keyword id="KW-1043">Host membrane</keyword>
<keyword id="KW-0945">Host-virus interaction</keyword>
<keyword id="KW-0449">Lipoprotein</keyword>
<keyword id="KW-0472">Membrane</keyword>
<keyword id="KW-0564">Palmitate</keyword>
<keyword id="KW-0732">Signal</keyword>
<keyword id="KW-0812">Transmembrane</keyword>
<keyword id="KW-1133">Transmembrane helix</keyword>
<keyword id="KW-1161">Viral attachment to host cell</keyword>
<keyword id="KW-0261">Viral envelope protein</keyword>
<keyword id="KW-1162">Viral penetration into host cytoplasm</keyword>
<keyword id="KW-0946">Virion</keyword>
<keyword id="KW-1164">Virus endocytosis by host</keyword>
<keyword id="KW-1160">Virus entry into host cell</keyword>
<reference key="1">
    <citation type="journal article" date="1990" name="Virology">
        <title>Cocirculation of two distinct evolutionary lineages of influenza type B virus since 1983.</title>
        <authorList>
            <person name="Rota P.A."/>
            <person name="Wallis T.R."/>
            <person name="Harmon M.W."/>
            <person name="Rota J.S."/>
            <person name="Kendal A.P."/>
            <person name="Nerome K."/>
        </authorList>
    </citation>
    <scope>NUCLEOTIDE SEQUENCE [GENOMIC RNA]</scope>
</reference>
<accession>P22092</accession>
<proteinExistence type="inferred from homology"/>
<organismHost>
    <name type="scientific">Homo sapiens</name>
    <name type="common">Human</name>
    <dbReference type="NCBI Taxonomy" id="9606"/>
</organismHost>
<gene>
    <name evidence="1" type="primary">HA</name>
</gene>
<comment type="function">
    <text evidence="1">Binds to sialic acid-containing receptors on the cell surface, bringing about the attachment of the virus particle to the cell. Plays a major role in the determination of host range restriction and virulence. Class I viral fusion protein. Responsible for penetration of the virus into the cell cytoplasm by mediating the fusion of the membrane of the endocytosed virus particle with the endosomal membrane. Low pH in endosomes induce an irreversible conformational change in HA2, releasing the fusion hydrophobic peptide. Several trimers are required to form a competent fusion pore.</text>
</comment>
<comment type="subunit">
    <text evidence="1">Homotrimer of disulfide-linked HA1-HA2.</text>
</comment>
<comment type="subcellular location">
    <subcellularLocation>
        <location evidence="1">Virion membrane</location>
        <topology evidence="1">Single-pass type I membrane protein</topology>
    </subcellularLocation>
    <subcellularLocation>
        <location evidence="1">Host apical cell membrane</location>
        <topology evidence="1">Single-pass type I membrane protein</topology>
    </subcellularLocation>
    <text evidence="1">Targeted to the apical plasma membrane in epithelial polarized cells through a signal present in the transmembrane domain. Associated with glycosphingolipid- and cholesterol-enriched detergent-resistant lipid rafts.</text>
</comment>
<comment type="PTM">
    <text evidence="1">Palmitoylated.</text>
</comment>
<comment type="PTM">
    <text evidence="1">In natural infection, inactive HA is matured into HA1 and HA2 outside the cell by one or more trypsin-like, arginine-specific endoprotease secreted by the bronchial epithelial cells. One identified protease that may be involved in this process is secreted in lungs by club cells.</text>
</comment>
<comment type="miscellaneous">
    <text>Major glycoprotein, comprises over 80% of the envelope proteins present in virus particle.</text>
</comment>
<comment type="miscellaneous">
    <text>The extent of infection into host organism is determined by HA. Influenza viruses bud from the apical surface of polarized epithelial cells (e.g. bronchial epithelial cells) into lumen of lungs and are therefore usually pneumotropic. The reason is that HA is cleaved by tryptase clara which is restricted to lungs. However, HAs of H5 and H7 pantropic avian viruses subtypes can be cleaved by furin and subtilisin-type enzymes, allowing the virus to grow in other organs than lungs.</text>
</comment>
<comment type="miscellaneous">
    <text evidence="2">The influenza B genome consist of 8 RNA segments. Genetic variation of hemagglutinin and/or neuraminidase genes results in the emergence of new influenza strains. The mechanism of variation can be the result of point mutations or the result of genetic reassortment between segments of two different strains.</text>
</comment>
<comment type="similarity">
    <text evidence="1">Belongs to the influenza viruses hemagglutinin family.</text>
</comment>
<sequence length="585" mass="63112">MKAIIVLLMVVTSNADRICTGITSSNSPHVVKTATQGEVNVTGVIPLTTTPTKSHFANLKGTKTRGKLCPKCLNCTDLDVALARPKCMGTIPSAKASILHEVKPVTSGCFPIMHDRTKIRQLPNLLRGYEHIRLSTHNVINAETAPGGPYKVGTSGSCPNVTNGNGFFATMAWAVPKNDNNKTATNPLTVEVPYICTEGEDQITVWGFHSDSETQMVKLYGDSKPQKFTSSANGVTTHYVSQIGGFPNQAEDGGLPQSGRIVVDYMVQKSGKTGTITYQRGILLPQKVWCASGRSKVIKGSLPLIGEADCLHEKYGGLNKSKPYYTGEHAKAIGNCPIWVKTPLKLANGTKYRPPAKLLKERGFFGAIAGFLEGGWEGMIAGWHGYTSHGAHGVAVAADLKSTQEAINKITKNLNSLSELEVKNLQRLSGAMDELHNEILELDEKVDDLRADTISSQIELAVLLSNEGIINSEDEHLLALERKLKKMLGPSAVEIGNGCFETKHKCNQTCLDRIAAGTFNAGEFSLPTFDSLNITAASLNDDGLDNHTILLYYSTAASSLAVTLMIAIFIVYMVSRDNVSCSICL</sequence>